<gene>
    <name evidence="1" type="primary">kup</name>
    <name type="ordered locus">ELI_03890</name>
</gene>
<proteinExistence type="inferred from homology"/>
<keyword id="KW-0997">Cell inner membrane</keyword>
<keyword id="KW-1003">Cell membrane</keyword>
<keyword id="KW-0406">Ion transport</keyword>
<keyword id="KW-0472">Membrane</keyword>
<keyword id="KW-0630">Potassium</keyword>
<keyword id="KW-0633">Potassium transport</keyword>
<keyword id="KW-1185">Reference proteome</keyword>
<keyword id="KW-0769">Symport</keyword>
<keyword id="KW-0812">Transmembrane</keyword>
<keyword id="KW-1133">Transmembrane helix</keyword>
<keyword id="KW-0813">Transport</keyword>
<comment type="function">
    <text evidence="1">Transport of potassium into the cell. Likely operates as a K(+):H(+) symporter.</text>
</comment>
<comment type="catalytic activity">
    <reaction evidence="1">
        <text>K(+)(in) + H(+)(in) = K(+)(out) + H(+)(out)</text>
        <dbReference type="Rhea" id="RHEA:28490"/>
        <dbReference type="ChEBI" id="CHEBI:15378"/>
        <dbReference type="ChEBI" id="CHEBI:29103"/>
    </reaction>
    <physiologicalReaction direction="right-to-left" evidence="1">
        <dbReference type="Rhea" id="RHEA:28492"/>
    </physiologicalReaction>
</comment>
<comment type="subcellular location">
    <subcellularLocation>
        <location evidence="1">Cell inner membrane</location>
        <topology evidence="1">Multi-pass membrane protein</topology>
    </subcellularLocation>
</comment>
<comment type="similarity">
    <text evidence="1">Belongs to the HAK/KUP transporter (TC 2.A.72) family.</text>
</comment>
<feature type="chain" id="PRO_0000279782" description="Probable potassium transport system protein Kup">
    <location>
        <begin position="1"/>
        <end position="622"/>
    </location>
</feature>
<feature type="transmembrane region" description="Helical" evidence="1">
    <location>
        <begin position="7"/>
        <end position="27"/>
    </location>
</feature>
<feature type="transmembrane region" description="Helical" evidence="1">
    <location>
        <begin position="44"/>
        <end position="64"/>
    </location>
</feature>
<feature type="transmembrane region" description="Helical" evidence="1">
    <location>
        <begin position="95"/>
        <end position="115"/>
    </location>
</feature>
<feature type="transmembrane region" description="Helical" evidence="1">
    <location>
        <begin position="133"/>
        <end position="153"/>
    </location>
</feature>
<feature type="transmembrane region" description="Helical" evidence="1">
    <location>
        <begin position="165"/>
        <end position="185"/>
    </location>
</feature>
<feature type="transmembrane region" description="Helical" evidence="1">
    <location>
        <begin position="199"/>
        <end position="219"/>
    </location>
</feature>
<feature type="transmembrane region" description="Helical" evidence="1">
    <location>
        <begin position="243"/>
        <end position="263"/>
    </location>
</feature>
<feature type="transmembrane region" description="Helical" evidence="1">
    <location>
        <begin position="290"/>
        <end position="310"/>
    </location>
</feature>
<feature type="transmembrane region" description="Helical" evidence="1">
    <location>
        <begin position="338"/>
        <end position="358"/>
    </location>
</feature>
<feature type="transmembrane region" description="Helical" evidence="1">
    <location>
        <begin position="370"/>
        <end position="390"/>
    </location>
</feature>
<feature type="transmembrane region" description="Helical" evidence="1">
    <location>
        <begin position="395"/>
        <end position="415"/>
    </location>
</feature>
<feature type="transmembrane region" description="Helical" evidence="1">
    <location>
        <begin position="422"/>
        <end position="442"/>
    </location>
</feature>
<evidence type="ECO:0000255" key="1">
    <source>
        <dbReference type="HAMAP-Rule" id="MF_01522"/>
    </source>
</evidence>
<reference key="1">
    <citation type="journal article" date="2009" name="J. Bacteriol.">
        <title>Complete genome sequence of Erythrobacter litoralis HTCC2594.</title>
        <authorList>
            <person name="Oh H.M."/>
            <person name="Giovannoni S.J."/>
            <person name="Ferriera S."/>
            <person name="Johnson J."/>
            <person name="Cho J.C."/>
        </authorList>
    </citation>
    <scope>NUCLEOTIDE SEQUENCE [LARGE SCALE GENOMIC DNA]</scope>
    <source>
        <strain>HTCC2594</strain>
    </source>
</reference>
<sequence length="622" mass="67822">MDSTTKLAIGAIGIVFGDIGTSPLYAFRETFVGPNPLPIDYNHVLGVVSLIFWSMTLIVAIQYVTILMRADNKGQGGSLALVALISRSVRNTNYGWLVVLLGVFATSLFYGDSMITPAISVLSAVEGLVVVDPELQGFVIPIALVLLVGLFVLQKRGTAKVGALFAPVMIVYFTVIATLGLISIVQHPEILYALNPYYAVLFFINDGFLAFLALGSVVLAVTGSEALYSDMGHFGRGPMKLSWFGFVMPCLLLNYFGQGAMIVSLSGPEAQEAIQAPFFLLAPEMLRLPLVILATFATFIASQAVISGAFSITHQAIQLGFVPRLSVRHTSDAHSGQIYIPVINWALMVAVILLVLTFQNSSNLASAYGIAVTGAVTIDTLLMAVLLVGVWKWKWYYAAPVVIVFLIIDGAYFAANLTKVPDGGWFPLVVGLIVFTLLTTWARGRKLMRERMSEVALPIEIFAKSAHNSATRVPGTAIFMASSTAGVPSALLHNIKHNKVLHERVVILTVEISDIPYVDPAKRCEYSEIGQGIYRAILHYGFMEETNVPEGLKSMQQCGGEFDMMQTSFFLSRQTLLPSDKPGMPIWREKIFAWMLRNAATAMEFFGLPTNRVVELGSQVRI</sequence>
<protein>
    <recommendedName>
        <fullName evidence="1">Probable potassium transport system protein Kup</fullName>
    </recommendedName>
</protein>
<dbReference type="EMBL" id="CP000157">
    <property type="protein sequence ID" value="ABC62870.1"/>
    <property type="molecule type" value="Genomic_DNA"/>
</dbReference>
<dbReference type="RefSeq" id="WP_011413746.1">
    <property type="nucleotide sequence ID" value="NC_007722.1"/>
</dbReference>
<dbReference type="STRING" id="314225.ELI_03890"/>
<dbReference type="KEGG" id="eli:ELI_03890"/>
<dbReference type="eggNOG" id="COG3158">
    <property type="taxonomic scope" value="Bacteria"/>
</dbReference>
<dbReference type="HOGENOM" id="CLU_008142_4_2_5"/>
<dbReference type="OrthoDB" id="9805577at2"/>
<dbReference type="Proteomes" id="UP000008808">
    <property type="component" value="Chromosome"/>
</dbReference>
<dbReference type="GO" id="GO:0005886">
    <property type="term" value="C:plasma membrane"/>
    <property type="evidence" value="ECO:0007669"/>
    <property type="project" value="UniProtKB-SubCell"/>
</dbReference>
<dbReference type="GO" id="GO:0015079">
    <property type="term" value="F:potassium ion transmembrane transporter activity"/>
    <property type="evidence" value="ECO:0007669"/>
    <property type="project" value="UniProtKB-UniRule"/>
</dbReference>
<dbReference type="GO" id="GO:0015293">
    <property type="term" value="F:symporter activity"/>
    <property type="evidence" value="ECO:0007669"/>
    <property type="project" value="UniProtKB-UniRule"/>
</dbReference>
<dbReference type="HAMAP" id="MF_01522">
    <property type="entry name" value="Kup"/>
    <property type="match status" value="1"/>
</dbReference>
<dbReference type="InterPro" id="IPR003855">
    <property type="entry name" value="K+_transporter"/>
</dbReference>
<dbReference type="InterPro" id="IPR053952">
    <property type="entry name" value="K_trans_C"/>
</dbReference>
<dbReference type="InterPro" id="IPR053951">
    <property type="entry name" value="K_trans_N"/>
</dbReference>
<dbReference type="InterPro" id="IPR023051">
    <property type="entry name" value="Kup"/>
</dbReference>
<dbReference type="PANTHER" id="PTHR30540:SF79">
    <property type="entry name" value="LOW AFFINITY POTASSIUM TRANSPORT SYSTEM PROTEIN KUP"/>
    <property type="match status" value="1"/>
</dbReference>
<dbReference type="PANTHER" id="PTHR30540">
    <property type="entry name" value="OSMOTIC STRESS POTASSIUM TRANSPORTER"/>
    <property type="match status" value="1"/>
</dbReference>
<dbReference type="Pfam" id="PF02705">
    <property type="entry name" value="K_trans"/>
    <property type="match status" value="1"/>
</dbReference>
<dbReference type="Pfam" id="PF22776">
    <property type="entry name" value="K_trans_C"/>
    <property type="match status" value="1"/>
</dbReference>
<name>KUP_ERYLH</name>
<organism>
    <name type="scientific">Erythrobacter litoralis (strain HTCC2594)</name>
    <dbReference type="NCBI Taxonomy" id="314225"/>
    <lineage>
        <taxon>Bacteria</taxon>
        <taxon>Pseudomonadati</taxon>
        <taxon>Pseudomonadota</taxon>
        <taxon>Alphaproteobacteria</taxon>
        <taxon>Sphingomonadales</taxon>
        <taxon>Erythrobacteraceae</taxon>
        <taxon>Erythrobacter/Porphyrobacter group</taxon>
        <taxon>Erythrobacter</taxon>
    </lineage>
</organism>
<accession>Q2NBS1</accession>